<feature type="chain" id="PRO_0000133898" description="Enolase">
    <location>
        <begin position="1"/>
        <end position="426"/>
    </location>
</feature>
<feature type="active site" description="Proton donor" evidence="1">
    <location>
        <position position="205"/>
    </location>
</feature>
<feature type="active site" description="Proton acceptor" evidence="1">
    <location>
        <position position="338"/>
    </location>
</feature>
<feature type="binding site" evidence="1">
    <location>
        <position position="163"/>
    </location>
    <ligand>
        <name>(2R)-2-phosphoglycerate</name>
        <dbReference type="ChEBI" id="CHEBI:58289"/>
    </ligand>
</feature>
<feature type="binding site" evidence="1">
    <location>
        <position position="242"/>
    </location>
    <ligand>
        <name>Mg(2+)</name>
        <dbReference type="ChEBI" id="CHEBI:18420"/>
    </ligand>
</feature>
<feature type="binding site" evidence="1">
    <location>
        <position position="286"/>
    </location>
    <ligand>
        <name>Mg(2+)</name>
        <dbReference type="ChEBI" id="CHEBI:18420"/>
    </ligand>
</feature>
<feature type="binding site" evidence="1">
    <location>
        <position position="313"/>
    </location>
    <ligand>
        <name>Mg(2+)</name>
        <dbReference type="ChEBI" id="CHEBI:18420"/>
    </ligand>
</feature>
<feature type="binding site" evidence="1">
    <location>
        <position position="338"/>
    </location>
    <ligand>
        <name>(2R)-2-phosphoglycerate</name>
        <dbReference type="ChEBI" id="CHEBI:58289"/>
    </ligand>
</feature>
<feature type="binding site" evidence="1">
    <location>
        <position position="367"/>
    </location>
    <ligand>
        <name>(2R)-2-phosphoglycerate</name>
        <dbReference type="ChEBI" id="CHEBI:58289"/>
    </ligand>
</feature>
<feature type="binding site" evidence="1">
    <location>
        <position position="368"/>
    </location>
    <ligand>
        <name>(2R)-2-phosphoglycerate</name>
        <dbReference type="ChEBI" id="CHEBI:58289"/>
    </ligand>
</feature>
<feature type="binding site" evidence="1">
    <location>
        <position position="389"/>
    </location>
    <ligand>
        <name>(2R)-2-phosphoglycerate</name>
        <dbReference type="ChEBI" id="CHEBI:58289"/>
    </ligand>
</feature>
<reference key="1">
    <citation type="journal article" date="1999" name="Nature">
        <title>Genomic sequence comparison of two unrelated isolates of the human gastric pathogen Helicobacter pylori.</title>
        <authorList>
            <person name="Alm R.A."/>
            <person name="Ling L.-S.L."/>
            <person name="Moir D.T."/>
            <person name="King B.L."/>
            <person name="Brown E.D."/>
            <person name="Doig P.C."/>
            <person name="Smith D.R."/>
            <person name="Noonan B."/>
            <person name="Guild B.C."/>
            <person name="deJonge B.L."/>
            <person name="Carmel G."/>
            <person name="Tummino P.J."/>
            <person name="Caruso A."/>
            <person name="Uria-Nickelsen M."/>
            <person name="Mills D.M."/>
            <person name="Ives C."/>
            <person name="Gibson R."/>
            <person name="Merberg D."/>
            <person name="Mills S.D."/>
            <person name="Jiang Q."/>
            <person name="Taylor D.E."/>
            <person name="Vovis G.F."/>
            <person name="Trust T.J."/>
        </authorList>
    </citation>
    <scope>NUCLEOTIDE SEQUENCE [LARGE SCALE GENOMIC DNA]</scope>
    <source>
        <strain>J99 / ATCC 700824</strain>
    </source>
</reference>
<organism>
    <name type="scientific">Helicobacter pylori (strain J99 / ATCC 700824)</name>
    <name type="common">Campylobacter pylori J99</name>
    <dbReference type="NCBI Taxonomy" id="85963"/>
    <lineage>
        <taxon>Bacteria</taxon>
        <taxon>Pseudomonadati</taxon>
        <taxon>Campylobacterota</taxon>
        <taxon>Epsilonproteobacteria</taxon>
        <taxon>Campylobacterales</taxon>
        <taxon>Helicobacteraceae</taxon>
        <taxon>Helicobacter</taxon>
    </lineage>
</organism>
<comment type="function">
    <text evidence="1">Catalyzes the reversible conversion of 2-phosphoglycerate (2-PG) into phosphoenolpyruvate (PEP). It is essential for the degradation of carbohydrates via glycolysis.</text>
</comment>
<comment type="catalytic activity">
    <reaction evidence="1">
        <text>(2R)-2-phosphoglycerate = phosphoenolpyruvate + H2O</text>
        <dbReference type="Rhea" id="RHEA:10164"/>
        <dbReference type="ChEBI" id="CHEBI:15377"/>
        <dbReference type="ChEBI" id="CHEBI:58289"/>
        <dbReference type="ChEBI" id="CHEBI:58702"/>
        <dbReference type="EC" id="4.2.1.11"/>
    </reaction>
</comment>
<comment type="cofactor">
    <cofactor evidence="1">
        <name>Mg(2+)</name>
        <dbReference type="ChEBI" id="CHEBI:18420"/>
    </cofactor>
    <text evidence="1">Binds a second Mg(2+) ion via substrate during catalysis.</text>
</comment>
<comment type="pathway">
    <text evidence="1">Carbohydrate degradation; glycolysis; pyruvate from D-glyceraldehyde 3-phosphate: step 4/5.</text>
</comment>
<comment type="subcellular location">
    <subcellularLocation>
        <location evidence="1">Cytoplasm</location>
    </subcellularLocation>
    <subcellularLocation>
        <location evidence="1">Secreted</location>
    </subcellularLocation>
    <subcellularLocation>
        <location evidence="1">Cell surface</location>
    </subcellularLocation>
    <text evidence="1">Fractions of enolase are present in both the cytoplasm and on the cell surface.</text>
</comment>
<comment type="similarity">
    <text evidence="1">Belongs to the enolase family.</text>
</comment>
<proteinExistence type="inferred from homology"/>
<evidence type="ECO:0000255" key="1">
    <source>
        <dbReference type="HAMAP-Rule" id="MF_00318"/>
    </source>
</evidence>
<gene>
    <name evidence="1" type="primary">eno</name>
    <name type="ordered locus">jhp_0142</name>
</gene>
<accession>Q9ZMS6</accession>
<sequence>MLTIKDIHALEVMDSRGNPTIQASVILSDNTKASAIVPSGASTGKREALELRDNDKTRFLGKGVLRACENVNSVIKHHLIGLEATNQAFVDERLRALDGTPNYANLGANAVLGVSMALARASAKALNLPLYRYLGGANALTLPVPMLNIINGGTHANNSIDFQEYMIMPLGFESFKEALRASAEVYHTLKKLLDEKNQLTSVGDEGGFAPNFNNNVEPLEIISQAIEKAGYKLGEEIALALDVASSELVDEHFNYHLKGENKILDSHELVAYYKELVAKYPIVSIEDGLSEDDWEGWAFLSKELGRQIQLVGDDLFVTNASILQKGIEKNVANAILIKPNQIGTISETLETIRLAKHHAYQCVISHRSGESEDSFIADFAVALNTGEIKTGSTARSERIAKYNRLLEIEHELKGGIYIGKELFKHG</sequence>
<keyword id="KW-0963">Cytoplasm</keyword>
<keyword id="KW-0324">Glycolysis</keyword>
<keyword id="KW-0456">Lyase</keyword>
<keyword id="KW-0460">Magnesium</keyword>
<keyword id="KW-0479">Metal-binding</keyword>
<keyword id="KW-0964">Secreted</keyword>
<dbReference type="EC" id="4.2.1.11" evidence="1"/>
<dbReference type="EMBL" id="AE001439">
    <property type="protein sequence ID" value="AAD05723.1"/>
    <property type="molecule type" value="Genomic_DNA"/>
</dbReference>
<dbReference type="PIR" id="H71967">
    <property type="entry name" value="H71967"/>
</dbReference>
<dbReference type="RefSeq" id="WP_000955648.1">
    <property type="nucleotide sequence ID" value="NC_000921.1"/>
</dbReference>
<dbReference type="SMR" id="Q9ZMS6"/>
<dbReference type="KEGG" id="hpj:jhp_0142"/>
<dbReference type="PATRIC" id="fig|85963.30.peg.882"/>
<dbReference type="eggNOG" id="COG0148">
    <property type="taxonomic scope" value="Bacteria"/>
</dbReference>
<dbReference type="UniPathway" id="UPA00109">
    <property type="reaction ID" value="UER00187"/>
</dbReference>
<dbReference type="Proteomes" id="UP000000804">
    <property type="component" value="Chromosome"/>
</dbReference>
<dbReference type="GO" id="GO:0009986">
    <property type="term" value="C:cell surface"/>
    <property type="evidence" value="ECO:0007669"/>
    <property type="project" value="UniProtKB-SubCell"/>
</dbReference>
<dbReference type="GO" id="GO:0005576">
    <property type="term" value="C:extracellular region"/>
    <property type="evidence" value="ECO:0007669"/>
    <property type="project" value="UniProtKB-SubCell"/>
</dbReference>
<dbReference type="GO" id="GO:0000015">
    <property type="term" value="C:phosphopyruvate hydratase complex"/>
    <property type="evidence" value="ECO:0007669"/>
    <property type="project" value="InterPro"/>
</dbReference>
<dbReference type="GO" id="GO:0000287">
    <property type="term" value="F:magnesium ion binding"/>
    <property type="evidence" value="ECO:0007669"/>
    <property type="project" value="UniProtKB-UniRule"/>
</dbReference>
<dbReference type="GO" id="GO:0004634">
    <property type="term" value="F:phosphopyruvate hydratase activity"/>
    <property type="evidence" value="ECO:0007669"/>
    <property type="project" value="UniProtKB-UniRule"/>
</dbReference>
<dbReference type="GO" id="GO:0006096">
    <property type="term" value="P:glycolytic process"/>
    <property type="evidence" value="ECO:0007669"/>
    <property type="project" value="UniProtKB-UniRule"/>
</dbReference>
<dbReference type="CDD" id="cd03313">
    <property type="entry name" value="enolase"/>
    <property type="match status" value="1"/>
</dbReference>
<dbReference type="Gene3D" id="3.20.20.120">
    <property type="entry name" value="Enolase-like C-terminal domain"/>
    <property type="match status" value="1"/>
</dbReference>
<dbReference type="Gene3D" id="3.30.390.10">
    <property type="entry name" value="Enolase-like, N-terminal domain"/>
    <property type="match status" value="1"/>
</dbReference>
<dbReference type="HAMAP" id="MF_00318">
    <property type="entry name" value="Enolase"/>
    <property type="match status" value="1"/>
</dbReference>
<dbReference type="InterPro" id="IPR000941">
    <property type="entry name" value="Enolase"/>
</dbReference>
<dbReference type="InterPro" id="IPR036849">
    <property type="entry name" value="Enolase-like_C_sf"/>
</dbReference>
<dbReference type="InterPro" id="IPR029017">
    <property type="entry name" value="Enolase-like_N"/>
</dbReference>
<dbReference type="InterPro" id="IPR020810">
    <property type="entry name" value="Enolase_C"/>
</dbReference>
<dbReference type="InterPro" id="IPR020809">
    <property type="entry name" value="Enolase_CS"/>
</dbReference>
<dbReference type="InterPro" id="IPR020811">
    <property type="entry name" value="Enolase_N"/>
</dbReference>
<dbReference type="NCBIfam" id="TIGR01060">
    <property type="entry name" value="eno"/>
    <property type="match status" value="1"/>
</dbReference>
<dbReference type="PANTHER" id="PTHR11902">
    <property type="entry name" value="ENOLASE"/>
    <property type="match status" value="1"/>
</dbReference>
<dbReference type="PANTHER" id="PTHR11902:SF1">
    <property type="entry name" value="ENOLASE"/>
    <property type="match status" value="1"/>
</dbReference>
<dbReference type="Pfam" id="PF00113">
    <property type="entry name" value="Enolase_C"/>
    <property type="match status" value="1"/>
</dbReference>
<dbReference type="Pfam" id="PF03952">
    <property type="entry name" value="Enolase_N"/>
    <property type="match status" value="1"/>
</dbReference>
<dbReference type="PIRSF" id="PIRSF001400">
    <property type="entry name" value="Enolase"/>
    <property type="match status" value="1"/>
</dbReference>
<dbReference type="PRINTS" id="PR00148">
    <property type="entry name" value="ENOLASE"/>
</dbReference>
<dbReference type="SFLD" id="SFLDF00002">
    <property type="entry name" value="enolase"/>
    <property type="match status" value="1"/>
</dbReference>
<dbReference type="SFLD" id="SFLDG00178">
    <property type="entry name" value="enolase"/>
    <property type="match status" value="1"/>
</dbReference>
<dbReference type="SMART" id="SM01192">
    <property type="entry name" value="Enolase_C"/>
    <property type="match status" value="1"/>
</dbReference>
<dbReference type="SMART" id="SM01193">
    <property type="entry name" value="Enolase_N"/>
    <property type="match status" value="1"/>
</dbReference>
<dbReference type="SUPFAM" id="SSF51604">
    <property type="entry name" value="Enolase C-terminal domain-like"/>
    <property type="match status" value="1"/>
</dbReference>
<dbReference type="SUPFAM" id="SSF54826">
    <property type="entry name" value="Enolase N-terminal domain-like"/>
    <property type="match status" value="1"/>
</dbReference>
<dbReference type="PROSITE" id="PS00164">
    <property type="entry name" value="ENOLASE"/>
    <property type="match status" value="1"/>
</dbReference>
<protein>
    <recommendedName>
        <fullName evidence="1">Enolase</fullName>
        <ecNumber evidence="1">4.2.1.11</ecNumber>
    </recommendedName>
    <alternativeName>
        <fullName evidence="1">2-phospho-D-glycerate hydro-lyase</fullName>
    </alternativeName>
    <alternativeName>
        <fullName evidence="1">2-phosphoglycerate dehydratase</fullName>
    </alternativeName>
</protein>
<name>ENO_HELPJ</name>